<feature type="transit peptide" description="Mitochondrion" evidence="2">
    <location>
        <begin position="1"/>
        <end status="unknown"/>
    </location>
</feature>
<feature type="chain" id="PRO_0000031089" description="Ribosome-recycling factor, mitochondrial">
    <location>
        <begin status="unknown"/>
        <end position="241"/>
    </location>
</feature>
<reference key="1">
    <citation type="journal article" date="2004" name="Nature">
        <title>Genome evolution in yeasts.</title>
        <authorList>
            <person name="Dujon B."/>
            <person name="Sherman D."/>
            <person name="Fischer G."/>
            <person name="Durrens P."/>
            <person name="Casaregola S."/>
            <person name="Lafontaine I."/>
            <person name="de Montigny J."/>
            <person name="Marck C."/>
            <person name="Neuveglise C."/>
            <person name="Talla E."/>
            <person name="Goffard N."/>
            <person name="Frangeul L."/>
            <person name="Aigle M."/>
            <person name="Anthouard V."/>
            <person name="Babour A."/>
            <person name="Barbe V."/>
            <person name="Barnay S."/>
            <person name="Blanchin S."/>
            <person name="Beckerich J.-M."/>
            <person name="Beyne E."/>
            <person name="Bleykasten C."/>
            <person name="Boisrame A."/>
            <person name="Boyer J."/>
            <person name="Cattolico L."/>
            <person name="Confanioleri F."/>
            <person name="de Daruvar A."/>
            <person name="Despons L."/>
            <person name="Fabre E."/>
            <person name="Fairhead C."/>
            <person name="Ferry-Dumazet H."/>
            <person name="Groppi A."/>
            <person name="Hantraye F."/>
            <person name="Hennequin C."/>
            <person name="Jauniaux N."/>
            <person name="Joyet P."/>
            <person name="Kachouri R."/>
            <person name="Kerrest A."/>
            <person name="Koszul R."/>
            <person name="Lemaire M."/>
            <person name="Lesur I."/>
            <person name="Ma L."/>
            <person name="Muller H."/>
            <person name="Nicaud J.-M."/>
            <person name="Nikolski M."/>
            <person name="Oztas S."/>
            <person name="Ozier-Kalogeropoulos O."/>
            <person name="Pellenz S."/>
            <person name="Potier S."/>
            <person name="Richard G.-F."/>
            <person name="Straub M.-L."/>
            <person name="Suleau A."/>
            <person name="Swennen D."/>
            <person name="Tekaia F."/>
            <person name="Wesolowski-Louvel M."/>
            <person name="Westhof E."/>
            <person name="Wirth B."/>
            <person name="Zeniou-Meyer M."/>
            <person name="Zivanovic Y."/>
            <person name="Bolotin-Fukuhara M."/>
            <person name="Thierry A."/>
            <person name="Bouchier C."/>
            <person name="Caudron B."/>
            <person name="Scarpelli C."/>
            <person name="Gaillardin C."/>
            <person name="Weissenbach J."/>
            <person name="Wincker P."/>
            <person name="Souciet J.-L."/>
        </authorList>
    </citation>
    <scope>NUCLEOTIDE SEQUENCE [LARGE SCALE GENOMIC DNA]</scope>
    <source>
        <strain>ATCC 8585 / CBS 2359 / DSM 70799 / NBRC 1267 / NRRL Y-1140 / WM37</strain>
    </source>
</reference>
<protein>
    <recommendedName>
        <fullName>Ribosome-recycling factor, mitochondrial</fullName>
        <shortName>RRF</shortName>
    </recommendedName>
    <alternativeName>
        <fullName>Ribosome-releasing factor, mitochondrial</fullName>
    </alternativeName>
</protein>
<comment type="function">
    <text evidence="1">Necessary for protein synthesis in mitochondria. Functions as a ribosome recycling factor in mitochondria (By similarity).</text>
</comment>
<comment type="subcellular location">
    <subcellularLocation>
        <location evidence="1">Mitochondrion</location>
    </subcellularLocation>
</comment>
<comment type="similarity">
    <text evidence="3">Belongs to the RRF family.</text>
</comment>
<sequence length="241" mass="26978">MSLQAFRIGLLSTTAAPLAYARPFSSYAALLAKKKGKTSGKPGKADNEEPIEIIDVKKYVIDATKQFEKTLELHKRKLAEQKVGTASPTIFNDLRVGKEGQKFTELAATSLKGRNALIVTVFDPKDTKNIVSAIMAAGLNLNPERIPNNDQQLKVSLPPITTETRQAVCKDLKKVFEDYKHSALKESLGHVRGEIMKELKHLQKKNDDVKKVIQDVEKIHKEYTIKLQEQLKQAEKSVMNQ</sequence>
<proteinExistence type="inferred from homology"/>
<gene>
    <name type="primary">RRF1</name>
    <name type="ordered locus">KLLA0C10593g</name>
</gene>
<name>RRF1_KLULA</name>
<evidence type="ECO:0000250" key="1"/>
<evidence type="ECO:0000255" key="2"/>
<evidence type="ECO:0000305" key="3"/>
<accession>Q6CTR7</accession>
<dbReference type="EMBL" id="CR382123">
    <property type="protein sequence ID" value="CAH01523.1"/>
    <property type="molecule type" value="Genomic_DNA"/>
</dbReference>
<dbReference type="RefSeq" id="XP_452672.1">
    <property type="nucleotide sequence ID" value="XM_452672.1"/>
</dbReference>
<dbReference type="SMR" id="Q6CTR7"/>
<dbReference type="FunCoup" id="Q6CTR7">
    <property type="interactions" value="83"/>
</dbReference>
<dbReference type="STRING" id="284590.Q6CTR7"/>
<dbReference type="PaxDb" id="284590-Q6CTR7"/>
<dbReference type="KEGG" id="kla:KLLA0_C10593g"/>
<dbReference type="eggNOG" id="KOG4759">
    <property type="taxonomic scope" value="Eukaryota"/>
</dbReference>
<dbReference type="HOGENOM" id="CLU_085410_0_0_1"/>
<dbReference type="InParanoid" id="Q6CTR7"/>
<dbReference type="OMA" id="PNNDQQL"/>
<dbReference type="Proteomes" id="UP000000598">
    <property type="component" value="Chromosome C"/>
</dbReference>
<dbReference type="GO" id="GO:0005739">
    <property type="term" value="C:mitochondrion"/>
    <property type="evidence" value="ECO:0007669"/>
    <property type="project" value="UniProtKB-SubCell"/>
</dbReference>
<dbReference type="GO" id="GO:0043023">
    <property type="term" value="F:ribosomal large subunit binding"/>
    <property type="evidence" value="ECO:0007669"/>
    <property type="project" value="TreeGrafter"/>
</dbReference>
<dbReference type="GO" id="GO:0006412">
    <property type="term" value="P:translation"/>
    <property type="evidence" value="ECO:0007669"/>
    <property type="project" value="UniProtKB-KW"/>
</dbReference>
<dbReference type="Gene3D" id="3.30.1360.40">
    <property type="match status" value="1"/>
</dbReference>
<dbReference type="Gene3D" id="1.10.132.20">
    <property type="entry name" value="Ribosome-recycling factor"/>
    <property type="match status" value="1"/>
</dbReference>
<dbReference type="InterPro" id="IPR002661">
    <property type="entry name" value="Ribosome_recyc_fac"/>
</dbReference>
<dbReference type="InterPro" id="IPR023584">
    <property type="entry name" value="Ribosome_recyc_fac_dom"/>
</dbReference>
<dbReference type="InterPro" id="IPR036191">
    <property type="entry name" value="RRF_sf"/>
</dbReference>
<dbReference type="PANTHER" id="PTHR20982:SF3">
    <property type="entry name" value="MITOCHONDRIAL RIBOSOME RECYCLING FACTOR PSEUDO 1"/>
    <property type="match status" value="1"/>
</dbReference>
<dbReference type="PANTHER" id="PTHR20982">
    <property type="entry name" value="RIBOSOME RECYCLING FACTOR"/>
    <property type="match status" value="1"/>
</dbReference>
<dbReference type="Pfam" id="PF01765">
    <property type="entry name" value="RRF"/>
    <property type="match status" value="1"/>
</dbReference>
<dbReference type="SUPFAM" id="SSF55194">
    <property type="entry name" value="Ribosome recycling factor, RRF"/>
    <property type="match status" value="1"/>
</dbReference>
<keyword id="KW-0496">Mitochondrion</keyword>
<keyword id="KW-0648">Protein biosynthesis</keyword>
<keyword id="KW-1185">Reference proteome</keyword>
<keyword id="KW-0809">Transit peptide</keyword>
<organism>
    <name type="scientific">Kluyveromyces lactis (strain ATCC 8585 / CBS 2359 / DSM 70799 / NBRC 1267 / NRRL Y-1140 / WM37)</name>
    <name type="common">Yeast</name>
    <name type="synonym">Candida sphaerica</name>
    <dbReference type="NCBI Taxonomy" id="284590"/>
    <lineage>
        <taxon>Eukaryota</taxon>
        <taxon>Fungi</taxon>
        <taxon>Dikarya</taxon>
        <taxon>Ascomycota</taxon>
        <taxon>Saccharomycotina</taxon>
        <taxon>Saccharomycetes</taxon>
        <taxon>Saccharomycetales</taxon>
        <taxon>Saccharomycetaceae</taxon>
        <taxon>Kluyveromyces</taxon>
    </lineage>
</organism>